<proteinExistence type="evidence at protein level"/>
<comment type="function">
    <text evidence="1 2">Interacts with VP4 to form the outer icosahedral capsid with an incomplete T=13 symmetry, about 80 nm in diameter, and consisting of 200 VP4-VP7 trimers.</text>
</comment>
<comment type="subunit">
    <text evidence="1">Interacts with VP4 and VP6.</text>
</comment>
<comment type="subcellular location">
    <subcellularLocation>
        <location evidence="3">Virion</location>
    </subcellularLocation>
</comment>
<comment type="similarity">
    <text evidence="3">Belongs to the aquareoviridae outer capsid VP7 protein family.</text>
</comment>
<organismHost>
    <name type="scientific">Ctenopharyngodon idella</name>
    <name type="common">Grass carp</name>
    <name type="synonym">Leuciscus idella</name>
    <dbReference type="NCBI Taxonomy" id="7959"/>
</organismHost>
<name>VP7_AQRVG</name>
<protein>
    <recommendedName>
        <fullName>Outer capsid protein VP7</fullName>
    </recommendedName>
</protein>
<dbReference type="EMBL" id="EF589107">
    <property type="protein sequence ID" value="ABV01049.1"/>
    <property type="molecule type" value="Genomic_RNA"/>
</dbReference>
<dbReference type="RefSeq" id="YP_001837104.1">
    <property type="nucleotide sequence ID" value="NC_010593.1"/>
</dbReference>
<dbReference type="SMR" id="B2BNE9"/>
<dbReference type="TCDB" id="1.A.60.1.4">
    <property type="family name" value="the mammalian reovirus pre-forming peptide, mu-1 (mu-1) family"/>
</dbReference>
<dbReference type="KEGG" id="vg:6218809"/>
<dbReference type="Proteomes" id="UP000001674">
    <property type="component" value="Genome"/>
</dbReference>
<dbReference type="GO" id="GO:0039621">
    <property type="term" value="C:T=13 icosahedral viral capsid"/>
    <property type="evidence" value="ECO:0007669"/>
    <property type="project" value="UniProtKB-KW"/>
</dbReference>
<dbReference type="GO" id="GO:0039624">
    <property type="term" value="C:viral outer capsid"/>
    <property type="evidence" value="ECO:0007669"/>
    <property type="project" value="UniProtKB-KW"/>
</dbReference>
<dbReference type="InterPro" id="IPR031413">
    <property type="entry name" value="Capsid_VP7"/>
</dbReference>
<dbReference type="Pfam" id="PF17071">
    <property type="entry name" value="Capsid_VP7"/>
    <property type="match status" value="1"/>
</dbReference>
<gene>
    <name type="primary">S10</name>
</gene>
<reference key="1">
    <citation type="journal article" date="2008" name="Virology">
        <title>Complete characterisation of the American grass carp reovirus genome (genus Aquareovirus: family Reoviridae) reveals an evolutionary link between aquareoviruses and coltiviruses.</title>
        <authorList>
            <person name="Mohd Jaafar F."/>
            <person name="Goodwin A.E."/>
            <person name="Belhouchet M."/>
            <person name="Merry G."/>
            <person name="Fang Q."/>
            <person name="Cantaloube J.F."/>
            <person name="Biagini P."/>
            <person name="de Micco P."/>
            <person name="Mertens P.P."/>
            <person name="Attoui H."/>
        </authorList>
    </citation>
    <scope>NUCLEOTIDE SEQUENCE [GENOMIC RNA]</scope>
</reference>
<reference key="2">
    <citation type="journal article" date="2008" name="J. Mol. Biol.">
        <title>Subnanometer-resolution structures of the grass carp reovirus core and virion.</title>
        <authorList>
            <person name="Cheng L."/>
            <person name="Fang Q."/>
            <person name="Shah S."/>
            <person name="Atanasov I.C."/>
            <person name="Zhou Z.H."/>
        </authorList>
    </citation>
    <scope>FUNCTION</scope>
    <scope>INTERACTION WITH VP4 AND VP6</scope>
    <source>
        <strain>GCRV</strain>
    </source>
</reference>
<sequence>MPAHMIPQVARAVVQSTYSGSLSAIDDNLEPTDDIDQAAYITTGRYVVCALCLATVSDSPTQLSRWVFHHCSDDRRPLIRSMLLASSRHAHALRESREVDMRRISRLVHQADEEDELDAPRQARRIGYVDLHSCDLQNPTPELATRQLCNDPTRTHSTHPHLARSHPYMLPTAALDIDPPEPVTMFATMSRTDGVPMLFNMTHRNVEVLASPAARASLMYALLKLANAKLTPKQRSIMYGPSANDMVAACTKACAATTFRHVGRYAARVVIEE</sequence>
<accession>B2BNE9</accession>
<organism>
    <name type="scientific">Aquareovirus G (isolate American grass carp/USA/PB01-155/-)</name>
    <name type="common">AQRV-G</name>
    <dbReference type="NCBI Taxonomy" id="648234"/>
    <lineage>
        <taxon>Viruses</taxon>
        <taxon>Riboviria</taxon>
        <taxon>Orthornavirae</taxon>
        <taxon>Duplornaviricota</taxon>
        <taxon>Resentoviricetes</taxon>
        <taxon>Reovirales</taxon>
        <taxon>Spinareoviridae</taxon>
        <taxon>Aquareovirus</taxon>
        <taxon>Aquareovirus graminis</taxon>
    </lineage>
</organism>
<feature type="chain" id="PRO_0000404194" description="Outer capsid protein VP7">
    <location>
        <begin position="1"/>
        <end position="273"/>
    </location>
</feature>
<evidence type="ECO:0000250" key="1"/>
<evidence type="ECO:0000269" key="2">
    <source>
    </source>
</evidence>
<evidence type="ECO:0000305" key="3"/>
<keyword id="KW-0167">Capsid protein</keyword>
<keyword id="KW-1152">Outer capsid protein</keyword>
<keyword id="KW-1185">Reference proteome</keyword>
<keyword id="KW-1146">T=13 icosahedral capsid protein</keyword>
<keyword id="KW-0946">Virion</keyword>